<evidence type="ECO:0000255" key="1">
    <source>
        <dbReference type="HAMAP-Rule" id="MF_00600"/>
    </source>
</evidence>
<evidence type="ECO:0000256" key="2">
    <source>
        <dbReference type="SAM" id="MobiDB-lite"/>
    </source>
</evidence>
<protein>
    <recommendedName>
        <fullName evidence="1">Chaperonin GroEL 2</fullName>
        <ecNumber evidence="1">5.6.1.7</ecNumber>
    </recommendedName>
    <alternativeName>
        <fullName evidence="1">60 kDa chaperonin 2</fullName>
    </alternativeName>
    <alternativeName>
        <fullName evidence="1">Chaperonin-60 2</fullName>
        <shortName evidence="1">Cpn60 2</shortName>
    </alternativeName>
</protein>
<dbReference type="EC" id="5.6.1.7" evidence="1"/>
<dbReference type="EMBL" id="AM420293">
    <property type="protein sequence ID" value="CAM05880.1"/>
    <property type="molecule type" value="Genomic_DNA"/>
</dbReference>
<dbReference type="RefSeq" id="WP_009943352.1">
    <property type="nucleotide sequence ID" value="NC_009142.1"/>
</dbReference>
<dbReference type="SMR" id="A4FPA5"/>
<dbReference type="STRING" id="405948.SACE_6714"/>
<dbReference type="KEGG" id="sen:SACE_6714"/>
<dbReference type="eggNOG" id="COG0459">
    <property type="taxonomic scope" value="Bacteria"/>
</dbReference>
<dbReference type="HOGENOM" id="CLU_016503_3_0_11"/>
<dbReference type="OrthoDB" id="9766614at2"/>
<dbReference type="Proteomes" id="UP000006728">
    <property type="component" value="Chromosome"/>
</dbReference>
<dbReference type="GO" id="GO:0005737">
    <property type="term" value="C:cytoplasm"/>
    <property type="evidence" value="ECO:0007669"/>
    <property type="project" value="UniProtKB-SubCell"/>
</dbReference>
<dbReference type="GO" id="GO:0005524">
    <property type="term" value="F:ATP binding"/>
    <property type="evidence" value="ECO:0007669"/>
    <property type="project" value="UniProtKB-UniRule"/>
</dbReference>
<dbReference type="GO" id="GO:0140662">
    <property type="term" value="F:ATP-dependent protein folding chaperone"/>
    <property type="evidence" value="ECO:0007669"/>
    <property type="project" value="InterPro"/>
</dbReference>
<dbReference type="GO" id="GO:0016853">
    <property type="term" value="F:isomerase activity"/>
    <property type="evidence" value="ECO:0007669"/>
    <property type="project" value="UniProtKB-KW"/>
</dbReference>
<dbReference type="GO" id="GO:0051082">
    <property type="term" value="F:unfolded protein binding"/>
    <property type="evidence" value="ECO:0007669"/>
    <property type="project" value="UniProtKB-UniRule"/>
</dbReference>
<dbReference type="GO" id="GO:0042026">
    <property type="term" value="P:protein refolding"/>
    <property type="evidence" value="ECO:0007669"/>
    <property type="project" value="UniProtKB-UniRule"/>
</dbReference>
<dbReference type="CDD" id="cd03344">
    <property type="entry name" value="GroEL"/>
    <property type="match status" value="1"/>
</dbReference>
<dbReference type="FunFam" id="3.50.7.10:FF:000001">
    <property type="entry name" value="60 kDa chaperonin"/>
    <property type="match status" value="1"/>
</dbReference>
<dbReference type="Gene3D" id="3.50.7.10">
    <property type="entry name" value="GroEL"/>
    <property type="match status" value="1"/>
</dbReference>
<dbReference type="Gene3D" id="1.10.560.10">
    <property type="entry name" value="GroEL-like equatorial domain"/>
    <property type="match status" value="1"/>
</dbReference>
<dbReference type="Gene3D" id="3.30.260.10">
    <property type="entry name" value="TCP-1-like chaperonin intermediate domain"/>
    <property type="match status" value="1"/>
</dbReference>
<dbReference type="HAMAP" id="MF_00600">
    <property type="entry name" value="CH60"/>
    <property type="match status" value="1"/>
</dbReference>
<dbReference type="InterPro" id="IPR018370">
    <property type="entry name" value="Chaperonin_Cpn60_CS"/>
</dbReference>
<dbReference type="InterPro" id="IPR001844">
    <property type="entry name" value="Cpn60/GroEL"/>
</dbReference>
<dbReference type="InterPro" id="IPR002423">
    <property type="entry name" value="Cpn60/GroEL/TCP-1"/>
</dbReference>
<dbReference type="InterPro" id="IPR027409">
    <property type="entry name" value="GroEL-like_apical_dom_sf"/>
</dbReference>
<dbReference type="InterPro" id="IPR027413">
    <property type="entry name" value="GROEL-like_equatorial_sf"/>
</dbReference>
<dbReference type="InterPro" id="IPR027410">
    <property type="entry name" value="TCP-1-like_intermed_sf"/>
</dbReference>
<dbReference type="NCBIfam" id="TIGR02348">
    <property type="entry name" value="GroEL"/>
    <property type="match status" value="1"/>
</dbReference>
<dbReference type="NCBIfam" id="NF000592">
    <property type="entry name" value="PRK00013.1"/>
    <property type="match status" value="1"/>
</dbReference>
<dbReference type="NCBIfam" id="NF009487">
    <property type="entry name" value="PRK12849.1"/>
    <property type="match status" value="1"/>
</dbReference>
<dbReference type="NCBIfam" id="NF009488">
    <property type="entry name" value="PRK12850.1"/>
    <property type="match status" value="1"/>
</dbReference>
<dbReference type="NCBIfam" id="NF009489">
    <property type="entry name" value="PRK12851.1"/>
    <property type="match status" value="1"/>
</dbReference>
<dbReference type="PANTHER" id="PTHR45633">
    <property type="entry name" value="60 KDA HEAT SHOCK PROTEIN, MITOCHONDRIAL"/>
    <property type="match status" value="1"/>
</dbReference>
<dbReference type="Pfam" id="PF00118">
    <property type="entry name" value="Cpn60_TCP1"/>
    <property type="match status" value="1"/>
</dbReference>
<dbReference type="PRINTS" id="PR00298">
    <property type="entry name" value="CHAPERONIN60"/>
</dbReference>
<dbReference type="SUPFAM" id="SSF52029">
    <property type="entry name" value="GroEL apical domain-like"/>
    <property type="match status" value="1"/>
</dbReference>
<dbReference type="SUPFAM" id="SSF48592">
    <property type="entry name" value="GroEL equatorial domain-like"/>
    <property type="match status" value="1"/>
</dbReference>
<dbReference type="SUPFAM" id="SSF54849">
    <property type="entry name" value="GroEL-intermediate domain like"/>
    <property type="match status" value="1"/>
</dbReference>
<dbReference type="PROSITE" id="PS00296">
    <property type="entry name" value="CHAPERONINS_CPN60"/>
    <property type="match status" value="1"/>
</dbReference>
<proteinExistence type="inferred from homology"/>
<keyword id="KW-0067">ATP-binding</keyword>
<keyword id="KW-0143">Chaperone</keyword>
<keyword id="KW-0963">Cytoplasm</keyword>
<keyword id="KW-0413">Isomerase</keyword>
<keyword id="KW-0547">Nucleotide-binding</keyword>
<keyword id="KW-1185">Reference proteome</keyword>
<sequence length="539" mass="56781">MAKQIAFDEQARRALERGVNQLADAVKVTLGPRGRHVVLDKQFGGPQVTNDGVTIAREIELEDPYENLGAQLAKNVATKTNDVAGDGTTTATVLAQAMVREGLRNLAAGANPTALGRGIQAATDAVVDALKAKATPVKGRDNIAQIATVSSRDESIGALVGEAMERVGEDGVISIEESSTLATELEITEGVQFDKGFVSPYFVTDSERQEAVLEDAQILLHREKISSIQDLLPLLEKIAQSGKPLLILAEDVEGEALSTLVVNAIRKTFKVVAVKAPYFGDRRKAFLDDLAAVTGAQVIAPEVGLKLSEAGPEVLGSARRITVTKDTTTIVDGRGPQDDVKARAEQIRKEIEVSDSDWDREKLQERLAKLAGGVAVIKVGAATETELKERKSRIEDAVAASKAAAEEGSVPGGGSSLIHAAKELNGDLGLSGDEATGVRLVRTALEAPLFWIASNAGQEGAVVVSKVRDLDWGQGYNAATLTFGDLVQPGIVDPLKVTRSAVANAASIARMVLTTESAVVDKPEEEDSAAAGHGHGHSH</sequence>
<feature type="chain" id="PRO_0000332069" description="Chaperonin GroEL 2">
    <location>
        <begin position="1"/>
        <end position="539"/>
    </location>
</feature>
<feature type="region of interest" description="Disordered" evidence="2">
    <location>
        <begin position="519"/>
        <end position="539"/>
    </location>
</feature>
<feature type="binding site" evidence="1">
    <location>
        <begin position="29"/>
        <end position="32"/>
    </location>
    <ligand>
        <name>ATP</name>
        <dbReference type="ChEBI" id="CHEBI:30616"/>
    </ligand>
</feature>
<feature type="binding site" evidence="1">
    <location>
        <begin position="86"/>
        <end position="90"/>
    </location>
    <ligand>
        <name>ATP</name>
        <dbReference type="ChEBI" id="CHEBI:30616"/>
    </ligand>
</feature>
<feature type="binding site" evidence="1">
    <location>
        <position position="413"/>
    </location>
    <ligand>
        <name>ATP</name>
        <dbReference type="ChEBI" id="CHEBI:30616"/>
    </ligand>
</feature>
<feature type="binding site" evidence="1">
    <location>
        <begin position="477"/>
        <end position="479"/>
    </location>
    <ligand>
        <name>ATP</name>
        <dbReference type="ChEBI" id="CHEBI:30616"/>
    </ligand>
</feature>
<feature type="binding site" evidence="1">
    <location>
        <position position="493"/>
    </location>
    <ligand>
        <name>ATP</name>
        <dbReference type="ChEBI" id="CHEBI:30616"/>
    </ligand>
</feature>
<comment type="function">
    <text evidence="1">Together with its co-chaperonin GroES, plays an essential role in assisting protein folding. The GroEL-GroES system forms a nano-cage that allows encapsulation of the non-native substrate proteins and provides a physical environment optimized to promote and accelerate protein folding.</text>
</comment>
<comment type="catalytic activity">
    <reaction evidence="1">
        <text>ATP + H2O + a folded polypeptide = ADP + phosphate + an unfolded polypeptide.</text>
        <dbReference type="EC" id="5.6.1.7"/>
    </reaction>
</comment>
<comment type="subunit">
    <text evidence="1">Forms a cylinder of 14 subunits composed of two heptameric rings stacked back-to-back. Interacts with the co-chaperonin GroES.</text>
</comment>
<comment type="subcellular location">
    <subcellularLocation>
        <location evidence="1">Cytoplasm</location>
    </subcellularLocation>
</comment>
<comment type="similarity">
    <text evidence="1">Belongs to the chaperonin (HSP60) family.</text>
</comment>
<accession>A4FPA5</accession>
<reference key="1">
    <citation type="journal article" date="2007" name="Nat. Biotechnol.">
        <title>Complete genome sequence of the erythromycin-producing bacterium Saccharopolyspora erythraea NRRL23338.</title>
        <authorList>
            <person name="Oliynyk M."/>
            <person name="Samborskyy M."/>
            <person name="Lester J.B."/>
            <person name="Mironenko T."/>
            <person name="Scott N."/>
            <person name="Dickens S."/>
            <person name="Haydock S.F."/>
            <person name="Leadlay P.F."/>
        </authorList>
    </citation>
    <scope>NUCLEOTIDE SEQUENCE [LARGE SCALE GENOMIC DNA]</scope>
    <source>
        <strain>ATCC 11635 / DSM 40517 / JCM 4748 / NBRC 13426 / NCIMB 8594 / NRRL 2338</strain>
    </source>
</reference>
<name>CH602_SACEN</name>
<gene>
    <name evidence="1" type="primary">groEL2</name>
    <name evidence="1" type="synonym">groL2</name>
    <name type="ordered locus">SACE_6714</name>
</gene>
<organism>
    <name type="scientific">Saccharopolyspora erythraea (strain ATCC 11635 / DSM 40517 / JCM 4748 / NBRC 13426 / NCIMB 8594 / NRRL 2338)</name>
    <dbReference type="NCBI Taxonomy" id="405948"/>
    <lineage>
        <taxon>Bacteria</taxon>
        <taxon>Bacillati</taxon>
        <taxon>Actinomycetota</taxon>
        <taxon>Actinomycetes</taxon>
        <taxon>Pseudonocardiales</taxon>
        <taxon>Pseudonocardiaceae</taxon>
        <taxon>Saccharopolyspora</taxon>
    </lineage>
</organism>